<keyword id="KW-0963">Cytoplasm</keyword>
<keyword id="KW-0378">Hydrolase</keyword>
<keyword id="KW-0546">Nucleotide metabolism</keyword>
<protein>
    <recommendedName>
        <fullName evidence="1">dTTP/UTP pyrophosphatase</fullName>
        <shortName evidence="1">dTTPase/UTPase</shortName>
        <ecNumber evidence="1">3.6.1.9</ecNumber>
    </recommendedName>
    <alternativeName>
        <fullName evidence="1">Nucleoside triphosphate pyrophosphatase</fullName>
    </alternativeName>
    <alternativeName>
        <fullName evidence="1">Nucleotide pyrophosphatase</fullName>
        <shortName evidence="1">Nucleotide PPase</shortName>
    </alternativeName>
</protein>
<reference key="1">
    <citation type="submission" date="2006-08" db="EMBL/GenBank/DDBJ databases">
        <title>Complete sequence of chromosome 1 of Shewanella sp. MR-7.</title>
        <authorList>
            <person name="Copeland A."/>
            <person name="Lucas S."/>
            <person name="Lapidus A."/>
            <person name="Barry K."/>
            <person name="Detter J.C."/>
            <person name="Glavina del Rio T."/>
            <person name="Hammon N."/>
            <person name="Israni S."/>
            <person name="Dalin E."/>
            <person name="Tice H."/>
            <person name="Pitluck S."/>
            <person name="Kiss H."/>
            <person name="Brettin T."/>
            <person name="Bruce D."/>
            <person name="Han C."/>
            <person name="Tapia R."/>
            <person name="Gilna P."/>
            <person name="Schmutz J."/>
            <person name="Larimer F."/>
            <person name="Land M."/>
            <person name="Hauser L."/>
            <person name="Kyrpides N."/>
            <person name="Mikhailova N."/>
            <person name="Nealson K."/>
            <person name="Konstantinidis K."/>
            <person name="Klappenbach J."/>
            <person name="Tiedje J."/>
            <person name="Richardson P."/>
        </authorList>
    </citation>
    <scope>NUCLEOTIDE SEQUENCE [LARGE SCALE GENOMIC DNA]</scope>
    <source>
        <strain>MR-7</strain>
    </source>
</reference>
<gene>
    <name type="ordered locus">Shewmr7_0482</name>
</gene>
<sequence length="194" mass="20547">MNLVLASTSPRRKELLTHIGLGRAEFSFSQVAPDIDETPKAGELPRDYVQRLAAEKALAGLALCSGMSQPAVLGSDTIVVLENEILGKPVDEADAKRVLRALSGKAHTVMTAVALAKADQTSVRLVETLVRFCVLSDADIDAYVASQEPMDKAGSYGIQGLGGCFVESIEGSYSCVVGLPLVETRELLSEAGIR</sequence>
<comment type="function">
    <text evidence="1">Nucleoside triphosphate pyrophosphatase that hydrolyzes dTTP and UTP. May have a dual role in cell division arrest and in preventing the incorporation of modified nucleotides into cellular nucleic acids.</text>
</comment>
<comment type="catalytic activity">
    <reaction evidence="1">
        <text>dTTP + H2O = dTMP + diphosphate + H(+)</text>
        <dbReference type="Rhea" id="RHEA:28534"/>
        <dbReference type="ChEBI" id="CHEBI:15377"/>
        <dbReference type="ChEBI" id="CHEBI:15378"/>
        <dbReference type="ChEBI" id="CHEBI:33019"/>
        <dbReference type="ChEBI" id="CHEBI:37568"/>
        <dbReference type="ChEBI" id="CHEBI:63528"/>
        <dbReference type="EC" id="3.6.1.9"/>
    </reaction>
</comment>
<comment type="catalytic activity">
    <reaction evidence="1">
        <text>UTP + H2O = UMP + diphosphate + H(+)</text>
        <dbReference type="Rhea" id="RHEA:29395"/>
        <dbReference type="ChEBI" id="CHEBI:15377"/>
        <dbReference type="ChEBI" id="CHEBI:15378"/>
        <dbReference type="ChEBI" id="CHEBI:33019"/>
        <dbReference type="ChEBI" id="CHEBI:46398"/>
        <dbReference type="ChEBI" id="CHEBI:57865"/>
        <dbReference type="EC" id="3.6.1.9"/>
    </reaction>
</comment>
<comment type="cofactor">
    <cofactor evidence="1">
        <name>a divalent metal cation</name>
        <dbReference type="ChEBI" id="CHEBI:60240"/>
    </cofactor>
</comment>
<comment type="subcellular location">
    <subcellularLocation>
        <location evidence="1">Cytoplasm</location>
    </subcellularLocation>
</comment>
<comment type="similarity">
    <text evidence="1">Belongs to the Maf family. YhdE subfamily.</text>
</comment>
<proteinExistence type="inferred from homology"/>
<organism>
    <name type="scientific">Shewanella sp. (strain MR-7)</name>
    <dbReference type="NCBI Taxonomy" id="60481"/>
    <lineage>
        <taxon>Bacteria</taxon>
        <taxon>Pseudomonadati</taxon>
        <taxon>Pseudomonadota</taxon>
        <taxon>Gammaproteobacteria</taxon>
        <taxon>Alteromonadales</taxon>
        <taxon>Shewanellaceae</taxon>
        <taxon>Shewanella</taxon>
    </lineage>
</organism>
<dbReference type="EC" id="3.6.1.9" evidence="1"/>
<dbReference type="EMBL" id="CP000444">
    <property type="protein sequence ID" value="ABI41485.1"/>
    <property type="molecule type" value="Genomic_DNA"/>
</dbReference>
<dbReference type="SMR" id="Q0HZH0"/>
<dbReference type="KEGG" id="shm:Shewmr7_0482"/>
<dbReference type="HOGENOM" id="CLU_040416_2_1_6"/>
<dbReference type="GO" id="GO:0005737">
    <property type="term" value="C:cytoplasm"/>
    <property type="evidence" value="ECO:0007669"/>
    <property type="project" value="UniProtKB-SubCell"/>
</dbReference>
<dbReference type="GO" id="GO:0036218">
    <property type="term" value="F:dTTP diphosphatase activity"/>
    <property type="evidence" value="ECO:0007669"/>
    <property type="project" value="RHEA"/>
</dbReference>
<dbReference type="GO" id="GO:0036221">
    <property type="term" value="F:UTP diphosphatase activity"/>
    <property type="evidence" value="ECO:0007669"/>
    <property type="project" value="RHEA"/>
</dbReference>
<dbReference type="GO" id="GO:0009117">
    <property type="term" value="P:nucleotide metabolic process"/>
    <property type="evidence" value="ECO:0007669"/>
    <property type="project" value="UniProtKB-KW"/>
</dbReference>
<dbReference type="CDD" id="cd00555">
    <property type="entry name" value="Maf"/>
    <property type="match status" value="1"/>
</dbReference>
<dbReference type="FunFam" id="3.90.950.10:FF:000004">
    <property type="entry name" value="dTTP/UTP pyrophosphatase"/>
    <property type="match status" value="1"/>
</dbReference>
<dbReference type="Gene3D" id="3.90.950.10">
    <property type="match status" value="1"/>
</dbReference>
<dbReference type="HAMAP" id="MF_00528">
    <property type="entry name" value="Maf"/>
    <property type="match status" value="1"/>
</dbReference>
<dbReference type="InterPro" id="IPR029001">
    <property type="entry name" value="ITPase-like_fam"/>
</dbReference>
<dbReference type="InterPro" id="IPR003697">
    <property type="entry name" value="Maf-like"/>
</dbReference>
<dbReference type="NCBIfam" id="TIGR00172">
    <property type="entry name" value="maf"/>
    <property type="match status" value="1"/>
</dbReference>
<dbReference type="PANTHER" id="PTHR43213">
    <property type="entry name" value="BIFUNCTIONAL DTTP/UTP PYROPHOSPHATASE/METHYLTRANSFERASE PROTEIN-RELATED"/>
    <property type="match status" value="1"/>
</dbReference>
<dbReference type="PANTHER" id="PTHR43213:SF5">
    <property type="entry name" value="BIFUNCTIONAL DTTP_UTP PYROPHOSPHATASE_METHYLTRANSFERASE PROTEIN-RELATED"/>
    <property type="match status" value="1"/>
</dbReference>
<dbReference type="Pfam" id="PF02545">
    <property type="entry name" value="Maf"/>
    <property type="match status" value="1"/>
</dbReference>
<dbReference type="PIRSF" id="PIRSF006305">
    <property type="entry name" value="Maf"/>
    <property type="match status" value="1"/>
</dbReference>
<dbReference type="SUPFAM" id="SSF52972">
    <property type="entry name" value="ITPase-like"/>
    <property type="match status" value="1"/>
</dbReference>
<name>NTPPA_SHESR</name>
<feature type="chain" id="PRO_0000267429" description="dTTP/UTP pyrophosphatase">
    <location>
        <begin position="1"/>
        <end position="194"/>
    </location>
</feature>
<feature type="active site" description="Proton acceptor" evidence="1">
    <location>
        <position position="76"/>
    </location>
</feature>
<feature type="site" description="Important for substrate specificity" evidence="1">
    <location>
        <position position="11"/>
    </location>
</feature>
<feature type="site" description="Important for substrate specificity" evidence="1">
    <location>
        <position position="77"/>
    </location>
</feature>
<feature type="site" description="Important for substrate specificity" evidence="1">
    <location>
        <position position="159"/>
    </location>
</feature>
<evidence type="ECO:0000255" key="1">
    <source>
        <dbReference type="HAMAP-Rule" id="MF_00528"/>
    </source>
</evidence>
<accession>Q0HZH0</accession>